<organism>
    <name type="scientific">Prochlorococcus marinus (strain AS9601)</name>
    <dbReference type="NCBI Taxonomy" id="146891"/>
    <lineage>
        <taxon>Bacteria</taxon>
        <taxon>Bacillati</taxon>
        <taxon>Cyanobacteriota</taxon>
        <taxon>Cyanophyceae</taxon>
        <taxon>Synechococcales</taxon>
        <taxon>Prochlorococcaceae</taxon>
        <taxon>Prochlorococcus</taxon>
    </lineage>
</organism>
<reference key="1">
    <citation type="journal article" date="2007" name="PLoS Genet.">
        <title>Patterns and implications of gene gain and loss in the evolution of Prochlorococcus.</title>
        <authorList>
            <person name="Kettler G.C."/>
            <person name="Martiny A.C."/>
            <person name="Huang K."/>
            <person name="Zucker J."/>
            <person name="Coleman M.L."/>
            <person name="Rodrigue S."/>
            <person name="Chen F."/>
            <person name="Lapidus A."/>
            <person name="Ferriera S."/>
            <person name="Johnson J."/>
            <person name="Steglich C."/>
            <person name="Church G.M."/>
            <person name="Richardson P."/>
            <person name="Chisholm S.W."/>
        </authorList>
    </citation>
    <scope>NUCLEOTIDE SEQUENCE [LARGE SCALE GENOMIC DNA]</scope>
    <source>
        <strain>AS9601</strain>
    </source>
</reference>
<name>RLMN_PROMS</name>
<protein>
    <recommendedName>
        <fullName evidence="1">Probable dual-specificity RNA methyltransferase RlmN</fullName>
        <ecNumber evidence="1">2.1.1.192</ecNumber>
    </recommendedName>
    <alternativeName>
        <fullName evidence="1">23S rRNA (adenine(2503)-C(2))-methyltransferase</fullName>
    </alternativeName>
    <alternativeName>
        <fullName evidence="1">23S rRNA m2A2503 methyltransferase</fullName>
    </alternativeName>
    <alternativeName>
        <fullName evidence="1">Ribosomal RNA large subunit methyltransferase N</fullName>
    </alternativeName>
    <alternativeName>
        <fullName evidence="1">tRNA (adenine(37)-C(2))-methyltransferase</fullName>
    </alternativeName>
    <alternativeName>
        <fullName evidence="1">tRNA m2A37 methyltransferase</fullName>
    </alternativeName>
</protein>
<dbReference type="EC" id="2.1.1.192" evidence="1"/>
<dbReference type="EMBL" id="CP000551">
    <property type="protein sequence ID" value="ABM70968.1"/>
    <property type="molecule type" value="Genomic_DNA"/>
</dbReference>
<dbReference type="RefSeq" id="WP_011819096.1">
    <property type="nucleotide sequence ID" value="NC_008816.1"/>
</dbReference>
<dbReference type="SMR" id="A2BT57"/>
<dbReference type="STRING" id="146891.A9601_16851"/>
<dbReference type="KEGG" id="pmb:A9601_16851"/>
<dbReference type="eggNOG" id="COG0820">
    <property type="taxonomic scope" value="Bacteria"/>
</dbReference>
<dbReference type="HOGENOM" id="CLU_029101_1_1_3"/>
<dbReference type="OrthoDB" id="9793973at2"/>
<dbReference type="Proteomes" id="UP000002590">
    <property type="component" value="Chromosome"/>
</dbReference>
<dbReference type="GO" id="GO:0005737">
    <property type="term" value="C:cytoplasm"/>
    <property type="evidence" value="ECO:0007669"/>
    <property type="project" value="UniProtKB-SubCell"/>
</dbReference>
<dbReference type="GO" id="GO:0051539">
    <property type="term" value="F:4 iron, 4 sulfur cluster binding"/>
    <property type="evidence" value="ECO:0007669"/>
    <property type="project" value="UniProtKB-UniRule"/>
</dbReference>
<dbReference type="GO" id="GO:0046872">
    <property type="term" value="F:metal ion binding"/>
    <property type="evidence" value="ECO:0007669"/>
    <property type="project" value="UniProtKB-KW"/>
</dbReference>
<dbReference type="GO" id="GO:0070040">
    <property type="term" value="F:rRNA (adenine(2503)-C2-)-methyltransferase activity"/>
    <property type="evidence" value="ECO:0007669"/>
    <property type="project" value="UniProtKB-UniRule"/>
</dbReference>
<dbReference type="GO" id="GO:0019843">
    <property type="term" value="F:rRNA binding"/>
    <property type="evidence" value="ECO:0007669"/>
    <property type="project" value="UniProtKB-UniRule"/>
</dbReference>
<dbReference type="GO" id="GO:0002935">
    <property type="term" value="F:tRNA (adenine(37)-C2)-methyltransferase activity"/>
    <property type="evidence" value="ECO:0007669"/>
    <property type="project" value="UniProtKB-UniRule"/>
</dbReference>
<dbReference type="GO" id="GO:0000049">
    <property type="term" value="F:tRNA binding"/>
    <property type="evidence" value="ECO:0007669"/>
    <property type="project" value="UniProtKB-UniRule"/>
</dbReference>
<dbReference type="GO" id="GO:0070475">
    <property type="term" value="P:rRNA base methylation"/>
    <property type="evidence" value="ECO:0007669"/>
    <property type="project" value="UniProtKB-UniRule"/>
</dbReference>
<dbReference type="GO" id="GO:0030488">
    <property type="term" value="P:tRNA methylation"/>
    <property type="evidence" value="ECO:0007669"/>
    <property type="project" value="UniProtKB-UniRule"/>
</dbReference>
<dbReference type="CDD" id="cd01335">
    <property type="entry name" value="Radical_SAM"/>
    <property type="match status" value="1"/>
</dbReference>
<dbReference type="FunFam" id="3.20.20.70:FF:000014">
    <property type="entry name" value="Probable dual-specificity RNA methyltransferase RlmN"/>
    <property type="match status" value="1"/>
</dbReference>
<dbReference type="Gene3D" id="1.10.150.530">
    <property type="match status" value="1"/>
</dbReference>
<dbReference type="Gene3D" id="3.20.20.70">
    <property type="entry name" value="Aldolase class I"/>
    <property type="match status" value="1"/>
</dbReference>
<dbReference type="HAMAP" id="MF_01849">
    <property type="entry name" value="RNA_methyltr_RlmN"/>
    <property type="match status" value="1"/>
</dbReference>
<dbReference type="InterPro" id="IPR013785">
    <property type="entry name" value="Aldolase_TIM"/>
</dbReference>
<dbReference type="InterPro" id="IPR040072">
    <property type="entry name" value="Methyltransferase_A"/>
</dbReference>
<dbReference type="InterPro" id="IPR048641">
    <property type="entry name" value="RlmN_N"/>
</dbReference>
<dbReference type="InterPro" id="IPR027492">
    <property type="entry name" value="RNA_MTrfase_RlmN"/>
</dbReference>
<dbReference type="InterPro" id="IPR004383">
    <property type="entry name" value="rRNA_lsu_MTrfase_RlmN/Cfr"/>
</dbReference>
<dbReference type="InterPro" id="IPR007197">
    <property type="entry name" value="rSAM"/>
</dbReference>
<dbReference type="NCBIfam" id="TIGR00048">
    <property type="entry name" value="rRNA_mod_RlmN"/>
    <property type="match status" value="1"/>
</dbReference>
<dbReference type="PANTHER" id="PTHR30544">
    <property type="entry name" value="23S RRNA METHYLTRANSFERASE"/>
    <property type="match status" value="1"/>
</dbReference>
<dbReference type="PANTHER" id="PTHR30544:SF5">
    <property type="entry name" value="RADICAL SAM CORE DOMAIN-CONTAINING PROTEIN"/>
    <property type="match status" value="1"/>
</dbReference>
<dbReference type="Pfam" id="PF13353">
    <property type="entry name" value="Fer4_12"/>
    <property type="match status" value="1"/>
</dbReference>
<dbReference type="Pfam" id="PF04055">
    <property type="entry name" value="Radical_SAM"/>
    <property type="match status" value="1"/>
</dbReference>
<dbReference type="Pfam" id="PF21016">
    <property type="entry name" value="RlmN_N"/>
    <property type="match status" value="1"/>
</dbReference>
<dbReference type="PIRSF" id="PIRSF006004">
    <property type="entry name" value="CHP00048"/>
    <property type="match status" value="1"/>
</dbReference>
<dbReference type="SFLD" id="SFLDF00275">
    <property type="entry name" value="adenosine_C2_methyltransferase"/>
    <property type="match status" value="1"/>
</dbReference>
<dbReference type="SFLD" id="SFLDG01062">
    <property type="entry name" value="methyltransferase_(Class_A)"/>
    <property type="match status" value="1"/>
</dbReference>
<dbReference type="SUPFAM" id="SSF102114">
    <property type="entry name" value="Radical SAM enzymes"/>
    <property type="match status" value="1"/>
</dbReference>
<dbReference type="PROSITE" id="PS51918">
    <property type="entry name" value="RADICAL_SAM"/>
    <property type="match status" value="1"/>
</dbReference>
<proteinExistence type="inferred from homology"/>
<gene>
    <name evidence="1" type="primary">rlmN</name>
    <name type="ordered locus">A9601_16851</name>
</gene>
<keyword id="KW-0004">4Fe-4S</keyword>
<keyword id="KW-0963">Cytoplasm</keyword>
<keyword id="KW-1015">Disulfide bond</keyword>
<keyword id="KW-0408">Iron</keyword>
<keyword id="KW-0411">Iron-sulfur</keyword>
<keyword id="KW-0479">Metal-binding</keyword>
<keyword id="KW-0489">Methyltransferase</keyword>
<keyword id="KW-0698">rRNA processing</keyword>
<keyword id="KW-0949">S-adenosyl-L-methionine</keyword>
<keyword id="KW-0808">Transferase</keyword>
<keyword id="KW-0819">tRNA processing</keyword>
<accession>A2BT57</accession>
<comment type="function">
    <text evidence="1">Specifically methylates position 2 of adenine 2503 in 23S rRNA and position 2 of adenine 37 in tRNAs.</text>
</comment>
<comment type="catalytic activity">
    <reaction evidence="1">
        <text>adenosine(2503) in 23S rRNA + 2 reduced [2Fe-2S]-[ferredoxin] + 2 S-adenosyl-L-methionine = 2-methyladenosine(2503) in 23S rRNA + 5'-deoxyadenosine + L-methionine + 2 oxidized [2Fe-2S]-[ferredoxin] + S-adenosyl-L-homocysteine</text>
        <dbReference type="Rhea" id="RHEA:42916"/>
        <dbReference type="Rhea" id="RHEA-COMP:10000"/>
        <dbReference type="Rhea" id="RHEA-COMP:10001"/>
        <dbReference type="Rhea" id="RHEA-COMP:10152"/>
        <dbReference type="Rhea" id="RHEA-COMP:10282"/>
        <dbReference type="ChEBI" id="CHEBI:17319"/>
        <dbReference type="ChEBI" id="CHEBI:33737"/>
        <dbReference type="ChEBI" id="CHEBI:33738"/>
        <dbReference type="ChEBI" id="CHEBI:57844"/>
        <dbReference type="ChEBI" id="CHEBI:57856"/>
        <dbReference type="ChEBI" id="CHEBI:59789"/>
        <dbReference type="ChEBI" id="CHEBI:74411"/>
        <dbReference type="ChEBI" id="CHEBI:74497"/>
        <dbReference type="EC" id="2.1.1.192"/>
    </reaction>
</comment>
<comment type="catalytic activity">
    <reaction evidence="1">
        <text>adenosine(37) in tRNA + 2 reduced [2Fe-2S]-[ferredoxin] + 2 S-adenosyl-L-methionine = 2-methyladenosine(37) in tRNA + 5'-deoxyadenosine + L-methionine + 2 oxidized [2Fe-2S]-[ferredoxin] + S-adenosyl-L-homocysteine</text>
        <dbReference type="Rhea" id="RHEA:43332"/>
        <dbReference type="Rhea" id="RHEA-COMP:10000"/>
        <dbReference type="Rhea" id="RHEA-COMP:10001"/>
        <dbReference type="Rhea" id="RHEA-COMP:10162"/>
        <dbReference type="Rhea" id="RHEA-COMP:10485"/>
        <dbReference type="ChEBI" id="CHEBI:17319"/>
        <dbReference type="ChEBI" id="CHEBI:33737"/>
        <dbReference type="ChEBI" id="CHEBI:33738"/>
        <dbReference type="ChEBI" id="CHEBI:57844"/>
        <dbReference type="ChEBI" id="CHEBI:57856"/>
        <dbReference type="ChEBI" id="CHEBI:59789"/>
        <dbReference type="ChEBI" id="CHEBI:74411"/>
        <dbReference type="ChEBI" id="CHEBI:74497"/>
        <dbReference type="EC" id="2.1.1.192"/>
    </reaction>
</comment>
<comment type="cofactor">
    <cofactor evidence="1">
        <name>[4Fe-4S] cluster</name>
        <dbReference type="ChEBI" id="CHEBI:49883"/>
    </cofactor>
    <text evidence="1">Binds 1 [4Fe-4S] cluster. The cluster is coordinated with 3 cysteines and an exchangeable S-adenosyl-L-methionine.</text>
</comment>
<comment type="subcellular location">
    <subcellularLocation>
        <location evidence="1">Cytoplasm</location>
    </subcellularLocation>
</comment>
<comment type="miscellaneous">
    <text evidence="1">Reaction proceeds by a ping-pong mechanism involving intermediate methylation of a conserved cysteine residue.</text>
</comment>
<comment type="similarity">
    <text evidence="1">Belongs to the radical SAM superfamily. RlmN family.</text>
</comment>
<sequence length="348" mass="39490">MKNLLGSSINDLENVALDYGQAAFRGRQIYNWIYNYRNKNKNIDQIEVLPLDFREKLKVDGFKVSELVIKERNLANDGTLKLLLSTEDNESIECVGIPTEKRLTACLSSQVGCPMDCKFCATGKEGLKRSLKASEILDQILFIEYEMNRKVTNIVFMGMGEPLLNIDELLLSIRSINNDFQISQRKITVSTVAIPKMISKLSAKSFQILSNCQFTLAISLHASNQKTRETIIPSAKNYEIKNIIEDCKTFVRETGRRVSFEYLMLSGVNDKLEHACELSNLLKGFQCHVNLIQYNQIDEVEFQRTSLKNLQLFQSRLVNNGIAVSLRKSRGLDKNAACGQLRQNAKSK</sequence>
<evidence type="ECO:0000255" key="1">
    <source>
        <dbReference type="HAMAP-Rule" id="MF_01849"/>
    </source>
</evidence>
<evidence type="ECO:0000255" key="2">
    <source>
        <dbReference type="PROSITE-ProRule" id="PRU01266"/>
    </source>
</evidence>
<feature type="chain" id="PRO_0000350313" description="Probable dual-specificity RNA methyltransferase RlmN">
    <location>
        <begin position="1"/>
        <end position="348"/>
    </location>
</feature>
<feature type="domain" description="Radical SAM core" evidence="2">
    <location>
        <begin position="99"/>
        <end position="333"/>
    </location>
</feature>
<feature type="active site" description="Proton acceptor" evidence="1">
    <location>
        <position position="93"/>
    </location>
</feature>
<feature type="active site" description="S-methylcysteine intermediate" evidence="1">
    <location>
        <position position="338"/>
    </location>
</feature>
<feature type="binding site" evidence="1">
    <location>
        <position position="113"/>
    </location>
    <ligand>
        <name>[4Fe-4S] cluster</name>
        <dbReference type="ChEBI" id="CHEBI:49883"/>
        <note>4Fe-4S-S-AdoMet</note>
    </ligand>
</feature>
<feature type="binding site" evidence="1">
    <location>
        <position position="117"/>
    </location>
    <ligand>
        <name>[4Fe-4S] cluster</name>
        <dbReference type="ChEBI" id="CHEBI:49883"/>
        <note>4Fe-4S-S-AdoMet</note>
    </ligand>
</feature>
<feature type="binding site" evidence="1">
    <location>
        <position position="120"/>
    </location>
    <ligand>
        <name>[4Fe-4S] cluster</name>
        <dbReference type="ChEBI" id="CHEBI:49883"/>
        <note>4Fe-4S-S-AdoMet</note>
    </ligand>
</feature>
<feature type="binding site" evidence="1">
    <location>
        <begin position="160"/>
        <end position="161"/>
    </location>
    <ligand>
        <name>S-adenosyl-L-methionine</name>
        <dbReference type="ChEBI" id="CHEBI:59789"/>
    </ligand>
</feature>
<feature type="binding site" evidence="1">
    <location>
        <position position="190"/>
    </location>
    <ligand>
        <name>S-adenosyl-L-methionine</name>
        <dbReference type="ChEBI" id="CHEBI:59789"/>
    </ligand>
</feature>
<feature type="binding site" evidence="1">
    <location>
        <begin position="219"/>
        <end position="221"/>
    </location>
    <ligand>
        <name>S-adenosyl-L-methionine</name>
        <dbReference type="ChEBI" id="CHEBI:59789"/>
    </ligand>
</feature>
<feature type="binding site" evidence="1">
    <location>
        <position position="295"/>
    </location>
    <ligand>
        <name>S-adenosyl-L-methionine</name>
        <dbReference type="ChEBI" id="CHEBI:59789"/>
    </ligand>
</feature>
<feature type="disulfide bond" description="(transient)" evidence="1">
    <location>
        <begin position="106"/>
        <end position="338"/>
    </location>
</feature>